<protein>
    <recommendedName>
        <fullName evidence="14">Deoxynucleoside triphosphate triphosphohydrolase SAMHD1</fullName>
        <shortName evidence="14">dNTPase</shortName>
        <ecNumber evidence="9 11">3.1.5.-</ecNumber>
    </recommendedName>
    <alternativeName>
        <fullName evidence="13">Interferon-gamma-inducible protein Mg11</fullName>
    </alternativeName>
    <alternativeName>
        <fullName evidence="14">SAM domain and HD domain-containing protein 1</fullName>
        <shortName evidence="12">mSAMHD1</shortName>
    </alternativeName>
</protein>
<name>SAMH1_MOUSE</name>
<evidence type="ECO:0000250" key="1">
    <source>
        <dbReference type="UniProtKB" id="Q9Y3Z3"/>
    </source>
</evidence>
<evidence type="ECO:0000255" key="2">
    <source>
        <dbReference type="PROSITE-ProRule" id="PRU00184"/>
    </source>
</evidence>
<evidence type="ECO:0000255" key="3">
    <source>
        <dbReference type="PROSITE-ProRule" id="PRU01175"/>
    </source>
</evidence>
<evidence type="ECO:0000256" key="4">
    <source>
        <dbReference type="SAM" id="MobiDB-lite"/>
    </source>
</evidence>
<evidence type="ECO:0000269" key="5">
    <source>
    </source>
</evidence>
<evidence type="ECO:0000269" key="6">
    <source>
    </source>
</evidence>
<evidence type="ECO:0000269" key="7">
    <source>
    </source>
</evidence>
<evidence type="ECO:0000269" key="8">
    <source>
    </source>
</evidence>
<evidence type="ECO:0000269" key="9">
    <source>
    </source>
</evidence>
<evidence type="ECO:0000269" key="10">
    <source>
    </source>
</evidence>
<evidence type="ECO:0000269" key="11">
    <source>
    </source>
</evidence>
<evidence type="ECO:0000303" key="12">
    <source>
    </source>
</evidence>
<evidence type="ECO:0000303" key="13">
    <source>
    </source>
</evidence>
<evidence type="ECO:0000305" key="14"/>
<evidence type="ECO:0000305" key="15">
    <source>
    </source>
</evidence>
<evidence type="ECO:0000305" key="16">
    <source>
    </source>
</evidence>
<evidence type="ECO:0000312" key="17">
    <source>
        <dbReference type="MGI" id="MGI:1927468"/>
    </source>
</evidence>
<evidence type="ECO:0007744" key="18">
    <source>
        <dbReference type="PDB" id="6BRG"/>
    </source>
</evidence>
<evidence type="ECO:0007744" key="19">
    <source>
        <dbReference type="PDB" id="6BRH"/>
    </source>
</evidence>
<evidence type="ECO:0007744" key="20">
    <source>
        <dbReference type="PDB" id="6BRK"/>
    </source>
</evidence>
<evidence type="ECO:0007744" key="21">
    <source>
    </source>
</evidence>
<evidence type="ECO:0007744" key="22">
    <source>
    </source>
</evidence>
<evidence type="ECO:0007744" key="23">
    <source>
    </source>
</evidence>
<evidence type="ECO:0007829" key="24">
    <source>
        <dbReference type="PDB" id="6BRG"/>
    </source>
</evidence>
<evidence type="ECO:0007829" key="25">
    <source>
        <dbReference type="PDB" id="6BRH"/>
    </source>
</evidence>
<evidence type="ECO:0007829" key="26">
    <source>
        <dbReference type="PDB" id="6BRK"/>
    </source>
</evidence>
<keyword id="KW-0002">3D-structure</keyword>
<keyword id="KW-0021">Allosteric enzyme</keyword>
<keyword id="KW-0025">Alternative splicing</keyword>
<keyword id="KW-0051">Antiviral defense</keyword>
<keyword id="KW-0158">Chromosome</keyword>
<keyword id="KW-0227">DNA damage</keyword>
<keyword id="KW-0234">DNA repair</keyword>
<keyword id="KW-0235">DNA replication</keyword>
<keyword id="KW-0342">GTP-binding</keyword>
<keyword id="KW-0378">Hydrolase</keyword>
<keyword id="KW-0391">Immunity</keyword>
<keyword id="KW-0399">Innate immunity</keyword>
<keyword id="KW-1017">Isopeptide bond</keyword>
<keyword id="KW-0464">Manganese</keyword>
<keyword id="KW-0479">Metal-binding</keyword>
<keyword id="KW-0547">Nucleotide-binding</keyword>
<keyword id="KW-0539">Nucleus</keyword>
<keyword id="KW-0597">Phosphoprotein</keyword>
<keyword id="KW-1185">Reference proteome</keyword>
<keyword id="KW-0832">Ubl conjugation</keyword>
<keyword id="KW-0862">Zinc</keyword>
<organism>
    <name type="scientific">Mus musculus</name>
    <name type="common">Mouse</name>
    <dbReference type="NCBI Taxonomy" id="10090"/>
    <lineage>
        <taxon>Eukaryota</taxon>
        <taxon>Metazoa</taxon>
        <taxon>Chordata</taxon>
        <taxon>Craniata</taxon>
        <taxon>Vertebrata</taxon>
        <taxon>Euteleostomi</taxon>
        <taxon>Mammalia</taxon>
        <taxon>Eutheria</taxon>
        <taxon>Euarchontoglires</taxon>
        <taxon>Glires</taxon>
        <taxon>Rodentia</taxon>
        <taxon>Myomorpha</taxon>
        <taxon>Muroidea</taxon>
        <taxon>Muridae</taxon>
        <taxon>Murinae</taxon>
        <taxon>Mus</taxon>
        <taxon>Mus</taxon>
    </lineage>
</organism>
<sequence>MDSLLGCGVSAAAREPVPRYLTSQPRVSEVAMQSAPLEQPAKRPRCDGSPRTPPSTPPATANLSADDDFQNTDLRTWEPEDVCSFLENRGFREKKVLDIFRDNKIAGSFLPFLDEDRLEDLGVSSLEERKKMIECIQQLSQSRIDLMKVFNDPIHGHIEFHPLLIRIIDTPQFQRLRYIKQLGGGYYVFPGASHNRFEHSLGVGYLAGCLVRALAEKQPELQISERDILCVQIAGLCHDLGHGPFSHMFDGRFIPRARPEKKWKHEQGSIEMFEHLVNSNELKLVMKNYGLVPEEDITFIKEQIMGPPITPVKDSLWPYKGRPATKSFLYEIVSNKRNGIDVDKWDYFARDCHHLGIQNNFDYKRFIKFARICEVEYKVKEDKTYIRKVKHICSREKEVGNLYDMFHTRNCLHRRAYQHKISNLIDIMITDAFLKADPYVEITGTAGKKFRISTAIDDMEAFTKLTDNIFLEVLHSTDPQLSEAQSILRNIECRNLYKYLGETQPKREKIRKEEYERLPQEVAKAKPEKAPDVELKAEDFIVDVINVDYGMEDKNPIDRVHFYCKSNSKQAVRINKEQVSQLLPEKFAEQLIRVYCKKKDGKSLDAAGKHFVQWCALRDFTKPQDGDIIAPLITPLKWNNKTSSCLQEVSKVKTCLKF</sequence>
<reference key="1">
    <citation type="journal article" date="1995" name="J. Leukoc. Biol.">
        <title>Cloning and characterization of a novel cDNA that is IFN-gamma-induced in mouse peritoneal macrophages and encodes a putative GTP-binding protein.</title>
        <authorList>
            <person name="Lafuse W.P."/>
            <person name="Brown D."/>
            <person name="Castle L."/>
            <person name="Zwilling B.S."/>
        </authorList>
    </citation>
    <scope>NUCLEOTIDE SEQUENCE [MRNA] OF 16-658 (ISOFORM 1)</scope>
    <source>
        <tissue>Macrophage</tissue>
    </source>
</reference>
<reference key="2">
    <citation type="journal article" date="2005" name="Science">
        <title>The transcriptional landscape of the mammalian genome.</title>
        <authorList>
            <person name="Carninci P."/>
            <person name="Kasukawa T."/>
            <person name="Katayama S."/>
            <person name="Gough J."/>
            <person name="Frith M.C."/>
            <person name="Maeda N."/>
            <person name="Oyama R."/>
            <person name="Ravasi T."/>
            <person name="Lenhard B."/>
            <person name="Wells C."/>
            <person name="Kodzius R."/>
            <person name="Shimokawa K."/>
            <person name="Bajic V.B."/>
            <person name="Brenner S.E."/>
            <person name="Batalov S."/>
            <person name="Forrest A.R."/>
            <person name="Zavolan M."/>
            <person name="Davis M.J."/>
            <person name="Wilming L.G."/>
            <person name="Aidinis V."/>
            <person name="Allen J.E."/>
            <person name="Ambesi-Impiombato A."/>
            <person name="Apweiler R."/>
            <person name="Aturaliya R.N."/>
            <person name="Bailey T.L."/>
            <person name="Bansal M."/>
            <person name="Baxter L."/>
            <person name="Beisel K.W."/>
            <person name="Bersano T."/>
            <person name="Bono H."/>
            <person name="Chalk A.M."/>
            <person name="Chiu K.P."/>
            <person name="Choudhary V."/>
            <person name="Christoffels A."/>
            <person name="Clutterbuck D.R."/>
            <person name="Crowe M.L."/>
            <person name="Dalla E."/>
            <person name="Dalrymple B.P."/>
            <person name="de Bono B."/>
            <person name="Della Gatta G."/>
            <person name="di Bernardo D."/>
            <person name="Down T."/>
            <person name="Engstrom P."/>
            <person name="Fagiolini M."/>
            <person name="Faulkner G."/>
            <person name="Fletcher C.F."/>
            <person name="Fukushima T."/>
            <person name="Furuno M."/>
            <person name="Futaki S."/>
            <person name="Gariboldi M."/>
            <person name="Georgii-Hemming P."/>
            <person name="Gingeras T.R."/>
            <person name="Gojobori T."/>
            <person name="Green R.E."/>
            <person name="Gustincich S."/>
            <person name="Harbers M."/>
            <person name="Hayashi Y."/>
            <person name="Hensch T.K."/>
            <person name="Hirokawa N."/>
            <person name="Hill D."/>
            <person name="Huminiecki L."/>
            <person name="Iacono M."/>
            <person name="Ikeo K."/>
            <person name="Iwama A."/>
            <person name="Ishikawa T."/>
            <person name="Jakt M."/>
            <person name="Kanapin A."/>
            <person name="Katoh M."/>
            <person name="Kawasawa Y."/>
            <person name="Kelso J."/>
            <person name="Kitamura H."/>
            <person name="Kitano H."/>
            <person name="Kollias G."/>
            <person name="Krishnan S.P."/>
            <person name="Kruger A."/>
            <person name="Kummerfeld S.K."/>
            <person name="Kurochkin I.V."/>
            <person name="Lareau L.F."/>
            <person name="Lazarevic D."/>
            <person name="Lipovich L."/>
            <person name="Liu J."/>
            <person name="Liuni S."/>
            <person name="McWilliam S."/>
            <person name="Madan Babu M."/>
            <person name="Madera M."/>
            <person name="Marchionni L."/>
            <person name="Matsuda H."/>
            <person name="Matsuzawa S."/>
            <person name="Miki H."/>
            <person name="Mignone F."/>
            <person name="Miyake S."/>
            <person name="Morris K."/>
            <person name="Mottagui-Tabar S."/>
            <person name="Mulder N."/>
            <person name="Nakano N."/>
            <person name="Nakauchi H."/>
            <person name="Ng P."/>
            <person name="Nilsson R."/>
            <person name="Nishiguchi S."/>
            <person name="Nishikawa S."/>
            <person name="Nori F."/>
            <person name="Ohara O."/>
            <person name="Okazaki Y."/>
            <person name="Orlando V."/>
            <person name="Pang K.C."/>
            <person name="Pavan W.J."/>
            <person name="Pavesi G."/>
            <person name="Pesole G."/>
            <person name="Petrovsky N."/>
            <person name="Piazza S."/>
            <person name="Reed J."/>
            <person name="Reid J.F."/>
            <person name="Ring B.Z."/>
            <person name="Ringwald M."/>
            <person name="Rost B."/>
            <person name="Ruan Y."/>
            <person name="Salzberg S.L."/>
            <person name="Sandelin A."/>
            <person name="Schneider C."/>
            <person name="Schoenbach C."/>
            <person name="Sekiguchi K."/>
            <person name="Semple C.A."/>
            <person name="Seno S."/>
            <person name="Sessa L."/>
            <person name="Sheng Y."/>
            <person name="Shibata Y."/>
            <person name="Shimada H."/>
            <person name="Shimada K."/>
            <person name="Silva D."/>
            <person name="Sinclair B."/>
            <person name="Sperling S."/>
            <person name="Stupka E."/>
            <person name="Sugiura K."/>
            <person name="Sultana R."/>
            <person name="Takenaka Y."/>
            <person name="Taki K."/>
            <person name="Tammoja K."/>
            <person name="Tan S.L."/>
            <person name="Tang S."/>
            <person name="Taylor M.S."/>
            <person name="Tegner J."/>
            <person name="Teichmann S.A."/>
            <person name="Ueda H.R."/>
            <person name="van Nimwegen E."/>
            <person name="Verardo R."/>
            <person name="Wei C.L."/>
            <person name="Yagi K."/>
            <person name="Yamanishi H."/>
            <person name="Zabarovsky E."/>
            <person name="Zhu S."/>
            <person name="Zimmer A."/>
            <person name="Hide W."/>
            <person name="Bult C."/>
            <person name="Grimmond S.M."/>
            <person name="Teasdale R.D."/>
            <person name="Liu E.T."/>
            <person name="Brusic V."/>
            <person name="Quackenbush J."/>
            <person name="Wahlestedt C."/>
            <person name="Mattick J.S."/>
            <person name="Hume D.A."/>
            <person name="Kai C."/>
            <person name="Sasaki D."/>
            <person name="Tomaru Y."/>
            <person name="Fukuda S."/>
            <person name="Kanamori-Katayama M."/>
            <person name="Suzuki M."/>
            <person name="Aoki J."/>
            <person name="Arakawa T."/>
            <person name="Iida J."/>
            <person name="Imamura K."/>
            <person name="Itoh M."/>
            <person name="Kato T."/>
            <person name="Kawaji H."/>
            <person name="Kawagashira N."/>
            <person name="Kawashima T."/>
            <person name="Kojima M."/>
            <person name="Kondo S."/>
            <person name="Konno H."/>
            <person name="Nakano K."/>
            <person name="Ninomiya N."/>
            <person name="Nishio T."/>
            <person name="Okada M."/>
            <person name="Plessy C."/>
            <person name="Shibata K."/>
            <person name="Shiraki T."/>
            <person name="Suzuki S."/>
            <person name="Tagami M."/>
            <person name="Waki K."/>
            <person name="Watahiki A."/>
            <person name="Okamura-Oho Y."/>
            <person name="Suzuki H."/>
            <person name="Kawai J."/>
            <person name="Hayashizaki Y."/>
        </authorList>
    </citation>
    <scope>NUCLEOTIDE SEQUENCE [LARGE SCALE MRNA] OF 22-658 (ISOFORM 1)</scope>
    <source>
        <strain>C57BL/6J</strain>
        <tissue>Bone marrow</tissue>
        <tissue>Ovary</tissue>
    </source>
</reference>
<reference key="3">
    <citation type="journal article" date="2009" name="PLoS Biol.">
        <title>Lineage-specific biology revealed by a finished genome assembly of the mouse.</title>
        <authorList>
            <person name="Church D.M."/>
            <person name="Goodstadt L."/>
            <person name="Hillier L.W."/>
            <person name="Zody M.C."/>
            <person name="Goldstein S."/>
            <person name="She X."/>
            <person name="Bult C.J."/>
            <person name="Agarwala R."/>
            <person name="Cherry J.L."/>
            <person name="DiCuccio M."/>
            <person name="Hlavina W."/>
            <person name="Kapustin Y."/>
            <person name="Meric P."/>
            <person name="Maglott D."/>
            <person name="Birtle Z."/>
            <person name="Marques A.C."/>
            <person name="Graves T."/>
            <person name="Zhou S."/>
            <person name="Teague B."/>
            <person name="Potamousis K."/>
            <person name="Churas C."/>
            <person name="Place M."/>
            <person name="Herschleb J."/>
            <person name="Runnheim R."/>
            <person name="Forrest D."/>
            <person name="Amos-Landgraf J."/>
            <person name="Schwartz D.C."/>
            <person name="Cheng Z."/>
            <person name="Lindblad-Toh K."/>
            <person name="Eichler E.E."/>
            <person name="Ponting C.P."/>
        </authorList>
    </citation>
    <scope>NUCLEOTIDE SEQUENCE [LARGE SCALE GENOMIC DNA]</scope>
    <source>
        <strain>C57BL/6J</strain>
    </source>
</reference>
<reference key="4">
    <citation type="journal article" date="2004" name="Genome Res.">
        <title>The status, quality, and expansion of the NIH full-length cDNA project: the Mammalian Gene Collection (MGC).</title>
        <authorList>
            <consortium name="The MGC Project Team"/>
        </authorList>
    </citation>
    <scope>NUCLEOTIDE SEQUENCE [LARGE SCALE MRNA] OF 12-658 (ISOFORM 1)</scope>
    <source>
        <strain>C57BL/6J</strain>
        <tissue>Brain</tissue>
        <tissue>Mammary gland</tissue>
    </source>
</reference>
<reference key="5">
    <citation type="journal article" date="2007" name="Proc. Natl. Acad. Sci. U.S.A.">
        <title>Large-scale phosphorylation analysis of mouse liver.</title>
        <authorList>
            <person name="Villen J."/>
            <person name="Beausoleil S.A."/>
            <person name="Gerber S.A."/>
            <person name="Gygi S.P."/>
        </authorList>
    </citation>
    <scope>PHOSPHORYLATION [LARGE SCALE ANALYSIS] AT SER-49; THR-52 AND THR-634</scope>
    <scope>IDENTIFICATION BY MASS SPECTROMETRY [LARGE SCALE ANALYSIS]</scope>
    <source>
        <tissue>Liver</tissue>
    </source>
</reference>
<reference key="6">
    <citation type="journal article" date="2009" name="Mol. Cell. Proteomics">
        <title>Large scale localization of protein phosphorylation by use of electron capture dissociation mass spectrometry.</title>
        <authorList>
            <person name="Sweet S.M."/>
            <person name="Bailey C.M."/>
            <person name="Cunningham D.L."/>
            <person name="Heath J.K."/>
            <person name="Cooper H.J."/>
        </authorList>
    </citation>
    <scope>PHOSPHORYLATION [LARGE SCALE ANALYSIS] AT THR-634</scope>
    <scope>IDENTIFICATION BY MASS SPECTROMETRY [LARGE SCALE ANALYSIS]</scope>
    <source>
        <tissue>Embryonic fibroblast</tissue>
    </source>
</reference>
<reference key="7">
    <citation type="journal article" date="2009" name="Nat. Genet.">
        <title>Mutations involved in Aicardi-Goutieres syndrome implicate SAMHD1 as regulator of the innate immune response.</title>
        <authorList>
            <person name="Rice G.I."/>
            <person name="Bond J."/>
            <person name="Asipu A."/>
            <person name="Brunette R.L."/>
            <person name="Manfield I.W."/>
            <person name="Carr I.M."/>
            <person name="Fuller J.C."/>
            <person name="Jackson R.M."/>
            <person name="Lamb T."/>
            <person name="Briggs T.A."/>
            <person name="Ali M."/>
            <person name="Gornall H."/>
            <person name="Couthard L.R."/>
            <person name="Aeby A."/>
            <person name="Attard-Montalto S.P."/>
            <person name="Bertini E."/>
            <person name="Bodemer C."/>
            <person name="Brockmann K."/>
            <person name="Brueton L.A."/>
            <person name="Corry P.C."/>
            <person name="Desguerre I."/>
            <person name="Fazzi E."/>
            <person name="Cazorla A.G."/>
            <person name="Gener B."/>
            <person name="Hamel B.C.J."/>
            <person name="Heiberg A."/>
            <person name="Hunter M."/>
            <person name="van der Knaap M.S."/>
            <person name="Kumar R."/>
            <person name="Lagae L."/>
            <person name="Landrieu P.G."/>
            <person name="Lourenco C.M."/>
            <person name="Marom D."/>
            <person name="McDermott M.F."/>
            <person name="van der Merwe W."/>
            <person name="Orcesi S."/>
            <person name="Prendiville J.S."/>
            <person name="Rasmussen M."/>
            <person name="Shalev S.A."/>
            <person name="Soler D.M."/>
            <person name="Shinawi M."/>
            <person name="Spiegel R."/>
            <person name="Tan T.Y."/>
            <person name="Vanderver A."/>
            <person name="Wakeling E.L."/>
            <person name="Wassmer E."/>
            <person name="Whittaker E."/>
            <person name="Lebon P."/>
            <person name="Stetson D.B."/>
            <person name="Bonthron D.T."/>
            <person name="Crow Y.J."/>
        </authorList>
    </citation>
    <scope>INDUCTION</scope>
</reference>
<reference key="8">
    <citation type="journal article" date="2010" name="Cell">
        <title>A tissue-specific atlas of mouse protein phosphorylation and expression.</title>
        <authorList>
            <person name="Huttlin E.L."/>
            <person name="Jedrychowski M.P."/>
            <person name="Elias J.E."/>
            <person name="Goswami T."/>
            <person name="Rad R."/>
            <person name="Beausoleil S.A."/>
            <person name="Villen J."/>
            <person name="Haas W."/>
            <person name="Sowa M.E."/>
            <person name="Gygi S.P."/>
        </authorList>
    </citation>
    <scope>PHOSPHORYLATION [LARGE SCALE ANALYSIS] AT SER-49; THR-52; SER-55; THR-56 AND THR-634</scope>
    <scope>IDENTIFICATION BY MASS SPECTROMETRY [LARGE SCALE ANALYSIS]</scope>
    <source>
        <tissue>Brain</tissue>
        <tissue>Brown adipose tissue</tissue>
        <tissue>Heart</tissue>
        <tissue>Kidney</tissue>
        <tissue>Liver</tissue>
        <tissue>Lung</tissue>
        <tissue>Pancreas</tissue>
        <tissue>Spleen</tissue>
        <tissue>Testis</tissue>
    </source>
</reference>
<reference key="9">
    <citation type="journal article" date="2013" name="Cell Rep.">
        <title>Mouse SAMHD1 has antiretroviral activity and suppresses a spontaneous cell-intrinsic antiviral response.</title>
        <authorList>
            <person name="Behrendt R."/>
            <person name="Schumann T."/>
            <person name="Gerbaulet A."/>
            <person name="Nguyen L.A."/>
            <person name="Schubert N."/>
            <person name="Alexopoulou D."/>
            <person name="Berka U."/>
            <person name="Lienenklaus S."/>
            <person name="Peschke K."/>
            <person name="Gibbert K."/>
            <person name="Wittmann S."/>
            <person name="Lindemann D."/>
            <person name="Weiss S."/>
            <person name="Dahl A."/>
            <person name="Naumann R."/>
            <person name="Dittmer U."/>
            <person name="Kim B."/>
            <person name="Mueller W."/>
            <person name="Gramberg T."/>
            <person name="Roers A."/>
        </authorList>
    </citation>
    <scope>FUNCTION</scope>
    <scope>DISRUPTION PHENOTYPE</scope>
</reference>
<reference key="10">
    <citation type="journal article" date="2013" name="EMBO J.">
        <title>SAMHD1-dependent retroviral control and escape in mice.</title>
        <authorList>
            <person name="Rehwinkel J."/>
            <person name="Maelfait J."/>
            <person name="Bridgeman A."/>
            <person name="Rigby R."/>
            <person name="Hayward B."/>
            <person name="Liberatore R.A."/>
            <person name="Bieniasz P.D."/>
            <person name="Towers G.J."/>
            <person name="Moita L.F."/>
            <person name="Crow Y.J."/>
            <person name="Bonthron D.T."/>
            <person name="Reis e Sousa C."/>
        </authorList>
    </citation>
    <scope>FUNCTION</scope>
    <scope>DISRUPTION PHENOTYPE</scope>
    <scope>ALTERNATIVE SPLICING (ISOFORMS 1 AND 2)</scope>
</reference>
<reference key="11">
    <citation type="journal article" date="2015" name="Retrovirology">
        <title>Phosphorylation of murine SAMHD1 regulates its antiretroviral activity.</title>
        <authorList>
            <person name="Wittmann S."/>
            <person name="Behrendt R."/>
            <person name="Eissmann K."/>
            <person name="Volkmann B."/>
            <person name="Thomas D."/>
            <person name="Ebert T."/>
            <person name="Cribier A."/>
            <person name="Benkirane M."/>
            <person name="Hornung V."/>
            <person name="Bouzas N.F."/>
            <person name="Gramberg T."/>
        </authorList>
    </citation>
    <scope>FUNCTION</scope>
    <scope>PHOSPHORYLATION AT THR-634</scope>
    <scope>MUTAGENESIS OF THR-634</scope>
</reference>
<reference key="12">
    <citation type="journal article" date="2018" name="Proc. Natl. Acad. Sci. U.S.A.">
        <title>SAMHD1 enhances immunoglobulin hypermutation by promoting transversion mutation.</title>
        <authorList>
            <person name="Thientosapol E.S."/>
            <person name="Bosnjak D."/>
            <person name="Durack T."/>
            <person name="Stevanovski I."/>
            <person name="van Geldermalsen M."/>
            <person name="Holst J."/>
            <person name="Jahan Z."/>
            <person name="Shepard C."/>
            <person name="Weninger W."/>
            <person name="Kim B."/>
            <person name="Brink R."/>
            <person name="Jolly C.J."/>
        </authorList>
    </citation>
    <scope>FUNCTION</scope>
</reference>
<reference key="13">
    <citation type="journal article" date="2019" name="Nat. Microbiol.">
        <title>A viral kinase counteracts in vivo restriction of murine cytomegalovirus by SAMHD1.</title>
        <authorList>
            <person name="Deutschmann J."/>
            <person name="Schneider A."/>
            <person name="Gruska I."/>
            <person name="Vetter B."/>
            <person name="Thomas D."/>
            <person name="Kiessling M."/>
            <person name="Wittmann S."/>
            <person name="Herrmann A."/>
            <person name="Schindler M."/>
            <person name="Milbradt J."/>
            <person name="Ferreiros N."/>
            <person name="Winkler T.H."/>
            <person name="Wiebusch L."/>
            <person name="Gramberg T."/>
        </authorList>
    </citation>
    <scope>FUNCTION</scope>
    <scope>DISRUPTION PHENOTYPE</scope>
    <scope>PHOSPHORYLATION AT THR-634 (MICROBIAL INFECTION)</scope>
    <scope>CATALYTIC ACTIVITY</scope>
</reference>
<reference evidence="18 19 20" key="14">
    <citation type="journal article" date="2018" name="Nat. Commun.">
        <title>The SAM domain of mouse SAMHD1 is critical for its activation and regulation.</title>
        <authorList>
            <person name="Buzovetsky O."/>
            <person name="Tang C."/>
            <person name="Knecht K.M."/>
            <person name="Antonucci J.M."/>
            <person name="Wu L."/>
            <person name="Ji X."/>
            <person name="Xiong Y."/>
        </authorList>
    </citation>
    <scope>X-RAY CRYSTALLOGRAPHY (3.40 ANGSTROMS) IN COMPLEX WITH MAGNESIUM AND DGTP</scope>
    <scope>FUNCTION</scope>
    <scope>CATALYTIC ACTIVITY</scope>
    <scope>DOMAIN</scope>
    <scope>ACTIVITY REGULATION</scope>
    <scope>MUTAGENESIS OF PHE-109; PHE-112 AND ARG-143</scope>
</reference>
<dbReference type="EC" id="3.1.5.-" evidence="9 11"/>
<dbReference type="EMBL" id="U15635">
    <property type="protein sequence ID" value="AAA66219.1"/>
    <property type="status" value="ALT_SEQ"/>
    <property type="molecule type" value="mRNA"/>
</dbReference>
<dbReference type="EMBL" id="AK054490">
    <property type="protein sequence ID" value="BAC35801.1"/>
    <property type="status" value="ALT_INIT"/>
    <property type="molecule type" value="mRNA"/>
</dbReference>
<dbReference type="EMBL" id="AK151335">
    <property type="protein sequence ID" value="BAE30313.1"/>
    <property type="status" value="ALT_INIT"/>
    <property type="molecule type" value="mRNA"/>
</dbReference>
<dbReference type="EMBL" id="AK153390">
    <property type="protein sequence ID" value="BAE31954.1"/>
    <property type="status" value="ALT_INIT"/>
    <property type="molecule type" value="mRNA"/>
</dbReference>
<dbReference type="EMBL" id="AL669828">
    <property type="status" value="NOT_ANNOTATED_CDS"/>
    <property type="molecule type" value="Genomic_DNA"/>
</dbReference>
<dbReference type="EMBL" id="BC012721">
    <property type="protein sequence ID" value="AAH12721.1"/>
    <property type="status" value="ALT_INIT"/>
    <property type="molecule type" value="mRNA"/>
</dbReference>
<dbReference type="EMBL" id="BC067198">
    <property type="protein sequence ID" value="AAH67198.1"/>
    <property type="status" value="ALT_INIT"/>
    <property type="molecule type" value="mRNA"/>
</dbReference>
<dbReference type="PIR" id="I49127">
    <property type="entry name" value="I49127"/>
</dbReference>
<dbReference type="RefSeq" id="NP_001132992.1">
    <property type="nucleotide sequence ID" value="NM_001139520.1"/>
</dbReference>
<dbReference type="RefSeq" id="NP_061339.3">
    <property type="nucleotide sequence ID" value="NM_018851.3"/>
</dbReference>
<dbReference type="PDB" id="6BRG">
    <property type="method" value="X-ray"/>
    <property type="resolution" value="3.50 A"/>
    <property type="chains" value="A/B/C/D=1-658"/>
</dbReference>
<dbReference type="PDB" id="6BRH">
    <property type="method" value="X-ray"/>
    <property type="resolution" value="3.40 A"/>
    <property type="chains" value="A/B=1-658"/>
</dbReference>
<dbReference type="PDB" id="6BRK">
    <property type="method" value="X-ray"/>
    <property type="resolution" value="3.50 A"/>
    <property type="chains" value="A=1-658"/>
</dbReference>
<dbReference type="PDBsum" id="6BRG"/>
<dbReference type="PDBsum" id="6BRH"/>
<dbReference type="PDBsum" id="6BRK"/>
<dbReference type="SMR" id="Q60710"/>
<dbReference type="BioGRID" id="207791">
    <property type="interactions" value="17"/>
</dbReference>
<dbReference type="FunCoup" id="Q60710">
    <property type="interactions" value="1752"/>
</dbReference>
<dbReference type="IntAct" id="Q60710">
    <property type="interactions" value="1"/>
</dbReference>
<dbReference type="STRING" id="10090.ENSMUSP00000059717"/>
<dbReference type="CarbonylDB" id="Q60710"/>
<dbReference type="GlyGen" id="Q60710">
    <property type="glycosylation" value="1 site, 1 O-linked glycan (1 site)"/>
</dbReference>
<dbReference type="iPTMnet" id="Q60710"/>
<dbReference type="PhosphoSitePlus" id="Q60710"/>
<dbReference type="SwissPalm" id="Q60710"/>
<dbReference type="jPOST" id="Q60710"/>
<dbReference type="PaxDb" id="10090-ENSMUSP00000059717"/>
<dbReference type="PeptideAtlas" id="Q60710"/>
<dbReference type="ProteomicsDB" id="256831">
    <molecule id="Q60710-1"/>
</dbReference>
<dbReference type="ProteomicsDB" id="316795"/>
<dbReference type="ProteomicsDB" id="318175"/>
<dbReference type="Pumba" id="Q60710"/>
<dbReference type="Antibodypedia" id="26616">
    <property type="antibodies" value="503 antibodies from 36 providers"/>
</dbReference>
<dbReference type="DNASU" id="56045"/>
<dbReference type="Ensembl" id="ENSMUST00000057725.10">
    <molecule id="Q60710-1"/>
    <property type="protein sequence ID" value="ENSMUSP00000059717.4"/>
    <property type="gene ID" value="ENSMUSG00000027639.17"/>
</dbReference>
<dbReference type="Ensembl" id="ENSMUST00000088523.11">
    <molecule id="Q60710-2"/>
    <property type="protein sequence ID" value="ENSMUSP00000085880.5"/>
    <property type="gene ID" value="ENSMUSG00000027639.17"/>
</dbReference>
<dbReference type="GeneID" id="56045"/>
<dbReference type="KEGG" id="mmu:56045"/>
<dbReference type="AGR" id="MGI:1927468"/>
<dbReference type="CTD" id="25939"/>
<dbReference type="MGI" id="MGI:1927468">
    <property type="gene designation" value="Samhd1"/>
</dbReference>
<dbReference type="VEuPathDB" id="HostDB:ENSMUSG00000027639"/>
<dbReference type="eggNOG" id="KOG2681">
    <property type="taxonomic scope" value="Eukaryota"/>
</dbReference>
<dbReference type="GeneTree" id="ENSGT00390000013867"/>
<dbReference type="InParanoid" id="Q60710"/>
<dbReference type="OMA" id="QVHGYIK"/>
<dbReference type="OrthoDB" id="9991235at2759"/>
<dbReference type="PhylomeDB" id="Q60710"/>
<dbReference type="TreeFam" id="TF316113"/>
<dbReference type="BRENDA" id="3.1.5.B1">
    <property type="organism ID" value="3474"/>
</dbReference>
<dbReference type="Reactome" id="R-MMU-8956319">
    <property type="pathway name" value="Nucleotide catabolism"/>
</dbReference>
<dbReference type="BioGRID-ORCS" id="56045">
    <property type="hits" value="1 hit in 77 CRISPR screens"/>
</dbReference>
<dbReference type="ChiTaRS" id="Samhd1">
    <property type="organism name" value="mouse"/>
</dbReference>
<dbReference type="PRO" id="PR:Q60710"/>
<dbReference type="Proteomes" id="UP000000589">
    <property type="component" value="Chromosome 2"/>
</dbReference>
<dbReference type="RNAct" id="Q60710">
    <property type="molecule type" value="protein"/>
</dbReference>
<dbReference type="Bgee" id="ENSMUSG00000027639">
    <property type="expression patterns" value="Expressed in granulocyte and 255 other cell types or tissues"/>
</dbReference>
<dbReference type="ExpressionAtlas" id="Q60710">
    <property type="expression patterns" value="baseline and differential"/>
</dbReference>
<dbReference type="GO" id="GO:0005654">
    <property type="term" value="C:nucleoplasm"/>
    <property type="evidence" value="ECO:0007669"/>
    <property type="project" value="Ensembl"/>
</dbReference>
<dbReference type="GO" id="GO:0005634">
    <property type="term" value="C:nucleus"/>
    <property type="evidence" value="ECO:0000250"/>
    <property type="project" value="UniProtKB"/>
</dbReference>
<dbReference type="GO" id="GO:0035861">
    <property type="term" value="C:site of double-strand break"/>
    <property type="evidence" value="ECO:0000250"/>
    <property type="project" value="UniProtKB"/>
</dbReference>
<dbReference type="GO" id="GO:0097197">
    <property type="term" value="C:tetraspanin-enriched microdomain"/>
    <property type="evidence" value="ECO:0007669"/>
    <property type="project" value="Ensembl"/>
</dbReference>
<dbReference type="GO" id="GO:0106375">
    <property type="term" value="F:deoxynucleoside triphosphate hydrolase activity"/>
    <property type="evidence" value="ECO:0007669"/>
    <property type="project" value="Ensembl"/>
</dbReference>
<dbReference type="GO" id="GO:0032567">
    <property type="term" value="F:dGTP binding"/>
    <property type="evidence" value="ECO:0000250"/>
    <property type="project" value="UniProtKB"/>
</dbReference>
<dbReference type="GO" id="GO:0008832">
    <property type="term" value="F:dGTPase activity"/>
    <property type="evidence" value="ECO:0000314"/>
    <property type="project" value="UniProtKB"/>
</dbReference>
<dbReference type="GO" id="GO:0005525">
    <property type="term" value="F:GTP binding"/>
    <property type="evidence" value="ECO:0007669"/>
    <property type="project" value="UniProtKB-KW"/>
</dbReference>
<dbReference type="GO" id="GO:0042802">
    <property type="term" value="F:identical protein binding"/>
    <property type="evidence" value="ECO:0007669"/>
    <property type="project" value="Ensembl"/>
</dbReference>
<dbReference type="GO" id="GO:0003676">
    <property type="term" value="F:nucleic acid binding"/>
    <property type="evidence" value="ECO:0000250"/>
    <property type="project" value="UniProtKB"/>
</dbReference>
<dbReference type="GO" id="GO:0003723">
    <property type="term" value="F:RNA binding"/>
    <property type="evidence" value="ECO:0000250"/>
    <property type="project" value="UniProtKB"/>
</dbReference>
<dbReference type="GO" id="GO:0003697">
    <property type="term" value="F:single-stranded DNA binding"/>
    <property type="evidence" value="ECO:0000250"/>
    <property type="project" value="UniProtKB"/>
</dbReference>
<dbReference type="GO" id="GO:0016793">
    <property type="term" value="F:triphosphoric monoester hydrolase activity"/>
    <property type="evidence" value="ECO:0000314"/>
    <property type="project" value="MGI"/>
</dbReference>
<dbReference type="GO" id="GO:0008270">
    <property type="term" value="F:zinc ion binding"/>
    <property type="evidence" value="ECO:0000250"/>
    <property type="project" value="UniProtKB"/>
</dbReference>
<dbReference type="GO" id="GO:0046061">
    <property type="term" value="P:dATP catabolic process"/>
    <property type="evidence" value="ECO:0000314"/>
    <property type="project" value="MGI"/>
</dbReference>
<dbReference type="GO" id="GO:0051607">
    <property type="term" value="P:defense response to virus"/>
    <property type="evidence" value="ECO:0000315"/>
    <property type="project" value="MGI"/>
</dbReference>
<dbReference type="GO" id="GO:0009264">
    <property type="term" value="P:deoxyribonucleotide catabolic process"/>
    <property type="evidence" value="ECO:0000250"/>
    <property type="project" value="UniProtKB"/>
</dbReference>
<dbReference type="GO" id="GO:0006203">
    <property type="term" value="P:dGTP catabolic process"/>
    <property type="evidence" value="ECO:0000250"/>
    <property type="project" value="UniProtKB"/>
</dbReference>
<dbReference type="GO" id="GO:0006974">
    <property type="term" value="P:DNA damage response"/>
    <property type="evidence" value="ECO:0000250"/>
    <property type="project" value="UniProtKB"/>
</dbReference>
<dbReference type="GO" id="GO:0110025">
    <property type="term" value="P:DNA strand resection involved in replication fork processing"/>
    <property type="evidence" value="ECO:0000250"/>
    <property type="project" value="UniProtKB"/>
</dbReference>
<dbReference type="GO" id="GO:0000724">
    <property type="term" value="P:double-strand break repair via homologous recombination"/>
    <property type="evidence" value="ECO:0000250"/>
    <property type="project" value="UniProtKB"/>
</dbReference>
<dbReference type="GO" id="GO:0045087">
    <property type="term" value="P:innate immune response"/>
    <property type="evidence" value="ECO:0007669"/>
    <property type="project" value="UniProtKB-KW"/>
</dbReference>
<dbReference type="GO" id="GO:0060339">
    <property type="term" value="P:negative regulation of type I interferon-mediated signaling pathway"/>
    <property type="evidence" value="ECO:0000315"/>
    <property type="project" value="UniProtKB"/>
</dbReference>
<dbReference type="GO" id="GO:0051289">
    <property type="term" value="P:protein homotetramerization"/>
    <property type="evidence" value="ECO:0000314"/>
    <property type="project" value="UniProtKB"/>
</dbReference>
<dbReference type="GO" id="GO:0045088">
    <property type="term" value="P:regulation of innate immune response"/>
    <property type="evidence" value="ECO:0000250"/>
    <property type="project" value="UniProtKB"/>
</dbReference>
<dbReference type="GO" id="GO:0016446">
    <property type="term" value="P:somatic hypermutation of immunoglobulin genes"/>
    <property type="evidence" value="ECO:0000315"/>
    <property type="project" value="UniProtKB"/>
</dbReference>
<dbReference type="CDD" id="cd00077">
    <property type="entry name" value="HDc"/>
    <property type="match status" value="1"/>
</dbReference>
<dbReference type="CDD" id="cd09508">
    <property type="entry name" value="SAM_HD"/>
    <property type="match status" value="1"/>
</dbReference>
<dbReference type="FunFam" id="1.10.3210.10:FF:000015">
    <property type="entry name" value="Deoxynucleoside triphosphate triphosphohydrolase SAMHD1"/>
    <property type="match status" value="1"/>
</dbReference>
<dbReference type="FunFam" id="1.10.150.50:FF:000067">
    <property type="entry name" value="SAM and HD domain-containing deoxynucleoside triphosphate triphosphohydrolase 1"/>
    <property type="match status" value="1"/>
</dbReference>
<dbReference type="FunFam" id="3.30.70.2760:FF:000002">
    <property type="entry name" value="SAM and HD domain-containing deoxynucleoside triphosphate triphosphohydrolase 1"/>
    <property type="match status" value="1"/>
</dbReference>
<dbReference type="Gene3D" id="3.30.70.2760">
    <property type="match status" value="1"/>
</dbReference>
<dbReference type="Gene3D" id="1.10.3210.10">
    <property type="entry name" value="Hypothetical protein af1432"/>
    <property type="match status" value="1"/>
</dbReference>
<dbReference type="Gene3D" id="1.10.150.50">
    <property type="entry name" value="Transcription Factor, Ets-1"/>
    <property type="match status" value="1"/>
</dbReference>
<dbReference type="InterPro" id="IPR050135">
    <property type="entry name" value="dGTPase-like"/>
</dbReference>
<dbReference type="InterPro" id="IPR003607">
    <property type="entry name" value="HD/PDEase_dom"/>
</dbReference>
<dbReference type="InterPro" id="IPR006674">
    <property type="entry name" value="HD_domain"/>
</dbReference>
<dbReference type="InterPro" id="IPR001660">
    <property type="entry name" value="SAM"/>
</dbReference>
<dbReference type="InterPro" id="IPR013761">
    <property type="entry name" value="SAM/pointed_sf"/>
</dbReference>
<dbReference type="PANTHER" id="PTHR11373">
    <property type="entry name" value="DEOXYNUCLEOSIDE TRIPHOSPHATE TRIPHOSPHOHYDROLASE"/>
    <property type="match status" value="1"/>
</dbReference>
<dbReference type="PANTHER" id="PTHR11373:SF4">
    <property type="entry name" value="DEOXYNUCLEOSIDE TRIPHOSPHATE TRIPHOSPHOHYDROLASE SAMHD1"/>
    <property type="match status" value="1"/>
</dbReference>
<dbReference type="Pfam" id="PF01966">
    <property type="entry name" value="HD"/>
    <property type="match status" value="1"/>
</dbReference>
<dbReference type="Pfam" id="PF07647">
    <property type="entry name" value="SAM_2"/>
    <property type="match status" value="1"/>
</dbReference>
<dbReference type="SMART" id="SM00471">
    <property type="entry name" value="HDc"/>
    <property type="match status" value="1"/>
</dbReference>
<dbReference type="SMART" id="SM00454">
    <property type="entry name" value="SAM"/>
    <property type="match status" value="1"/>
</dbReference>
<dbReference type="SUPFAM" id="SSF109604">
    <property type="entry name" value="HD-domain/PDEase-like"/>
    <property type="match status" value="1"/>
</dbReference>
<dbReference type="SUPFAM" id="SSF47769">
    <property type="entry name" value="SAM/Pointed domain"/>
    <property type="match status" value="1"/>
</dbReference>
<dbReference type="PROSITE" id="PS51831">
    <property type="entry name" value="HD"/>
    <property type="match status" value="1"/>
</dbReference>
<dbReference type="PROSITE" id="PS50105">
    <property type="entry name" value="SAM_DOMAIN"/>
    <property type="match status" value="1"/>
</dbReference>
<feature type="chain" id="PRO_0000153733" description="Deoxynucleoside triphosphate triphosphohydrolase SAMHD1">
    <location>
        <begin position="1"/>
        <end position="658"/>
    </location>
</feature>
<feature type="domain" description="SAM" evidence="2">
    <location>
        <begin position="77"/>
        <end position="142"/>
    </location>
</feature>
<feature type="domain" description="HD" evidence="3">
    <location>
        <begin position="196"/>
        <end position="348"/>
    </location>
</feature>
<feature type="region of interest" description="Disordered" evidence="4">
    <location>
        <begin position="23"/>
        <end position="68"/>
    </location>
</feature>
<feature type="active site" evidence="1">
    <location>
        <position position="265"/>
    </location>
</feature>
<feature type="binding site" description="in chain B" evidence="16 19">
    <location>
        <position position="148"/>
    </location>
    <ligand>
        <name>GTP</name>
        <dbReference type="ChEBI" id="CHEBI:37565"/>
        <note>allosteric activator; ligand shared between 3 neighboring subunits of the tetramer</note>
    </ligand>
</feature>
<feature type="binding site" description="in chain B" evidence="16 19">
    <location>
        <position position="149"/>
    </location>
    <ligand>
        <name>GTP</name>
        <dbReference type="ChEBI" id="CHEBI:37565"/>
        <note>allosteric activator; ligand shared between 3 neighboring subunits of the tetramer</note>
    </ligand>
</feature>
<feature type="binding site" description="in chain B" evidence="1">
    <location>
        <position position="151"/>
    </location>
    <ligand>
        <name>dGTP</name>
        <dbReference type="ChEBI" id="CHEBI:61429"/>
        <label>2</label>
        <note>allosteric activator; ligand shared between 3 neighboring subunits of the tetramer</note>
    </ligand>
</feature>
<feature type="binding site" description="in chain B" evidence="16 19">
    <location>
        <position position="169"/>
    </location>
    <ligand>
        <name>GTP</name>
        <dbReference type="ChEBI" id="CHEBI:37565"/>
        <note>allosteric activator; ligand shared between 3 neighboring subunits of the tetramer</note>
    </ligand>
</feature>
<feature type="binding site" description="in chain B" evidence="16 19">
    <location>
        <position position="174"/>
    </location>
    <ligand>
        <name>GTP</name>
        <dbReference type="ChEBI" id="CHEBI:37565"/>
        <note>allosteric activator; ligand shared between 3 neighboring subunits of the tetramer</note>
    </ligand>
</feature>
<feature type="binding site" description="in chain B" evidence="16 19">
    <location>
        <position position="177"/>
    </location>
    <ligand>
        <name>GTP</name>
        <dbReference type="ChEBI" id="CHEBI:37565"/>
        <note>allosteric activator; ligand shared between 3 neighboring subunits of the tetramer</note>
    </ligand>
</feature>
<feature type="binding site" evidence="9 19">
    <location>
        <position position="182"/>
    </location>
    <ligand>
        <name>dGTP</name>
        <dbReference type="ChEBI" id="CHEBI:61429"/>
        <label>1</label>
        <note>substrate</note>
    </ligand>
</feature>
<feature type="binding site" description="in chain C" evidence="1">
    <location>
        <position position="188"/>
    </location>
    <ligand>
        <name>dGTP</name>
        <dbReference type="ChEBI" id="CHEBI:61429"/>
        <label>2</label>
        <note>allosteric activator; ligand shared between 3 neighboring subunits of the tetramer</note>
    </ligand>
</feature>
<feature type="binding site" evidence="1">
    <location>
        <position position="199"/>
    </location>
    <ligand>
        <name>Mn(2+)</name>
        <dbReference type="ChEBI" id="CHEBI:29035"/>
    </ligand>
</feature>
<feature type="binding site" evidence="1">
    <location>
        <position position="238"/>
    </location>
    <ligand>
        <name>Mn(2+)</name>
        <dbReference type="ChEBI" id="CHEBI:29035"/>
    </ligand>
</feature>
<feature type="binding site" evidence="9 19">
    <location>
        <position position="239"/>
    </location>
    <ligand>
        <name>dGTP</name>
        <dbReference type="ChEBI" id="CHEBI:61429"/>
        <label>1</label>
        <note>substrate</note>
    </ligand>
</feature>
<feature type="binding site" evidence="1">
    <location>
        <position position="239"/>
    </location>
    <ligand>
        <name>Mn(2+)</name>
        <dbReference type="ChEBI" id="CHEBI:29035"/>
    </ligand>
</feature>
<feature type="binding site" evidence="9 19">
    <location>
        <position position="247"/>
    </location>
    <ligand>
        <name>dGTP</name>
        <dbReference type="ChEBI" id="CHEBI:61429"/>
        <label>1</label>
        <note>substrate</note>
    </ligand>
</feature>
<feature type="binding site" evidence="9 19">
    <location>
        <position position="265"/>
    </location>
    <ligand>
        <name>dGTP</name>
        <dbReference type="ChEBI" id="CHEBI:61429"/>
        <label>1</label>
        <note>substrate</note>
    </ligand>
</feature>
<feature type="binding site" evidence="9 19">
    <location>
        <position position="266"/>
    </location>
    <ligand>
        <name>dGTP</name>
        <dbReference type="ChEBI" id="CHEBI:61429"/>
        <label>1</label>
        <note>substrate</note>
    </ligand>
</feature>
<feature type="binding site" evidence="1">
    <location>
        <position position="343"/>
    </location>
    <ligand>
        <name>Mn(2+)</name>
        <dbReference type="ChEBI" id="CHEBI:29035"/>
    </ligand>
</feature>
<feature type="binding site" evidence="9 19">
    <location>
        <position position="347"/>
    </location>
    <ligand>
        <name>dGTP</name>
        <dbReference type="ChEBI" id="CHEBI:61429"/>
        <label>1</label>
        <note>substrate</note>
    </ligand>
</feature>
<feature type="binding site" evidence="9 19">
    <location>
        <position position="351"/>
    </location>
    <ligand>
        <name>dGTP</name>
        <dbReference type="ChEBI" id="CHEBI:61429"/>
        <label>1</label>
        <note>substrate</note>
    </ligand>
</feature>
<feature type="binding site" description="in chain A" evidence="1">
    <location>
        <position position="365"/>
    </location>
    <ligand>
        <name>dGTP</name>
        <dbReference type="ChEBI" id="CHEBI:61429"/>
        <label>2</label>
        <note>allosteric activator; ligand shared between 3 neighboring subunits of the tetramer</note>
    </ligand>
</feature>
<feature type="binding site" description="in chain A" evidence="1">
    <location>
        <position position="395"/>
    </location>
    <ligand>
        <name>dGTP</name>
        <dbReference type="ChEBI" id="CHEBI:61429"/>
        <label>2</label>
        <note>allosteric activator; ligand shared between 3 neighboring subunits of the tetramer</note>
    </ligand>
</feature>
<feature type="binding site" description="in chain A" evidence="1">
    <location>
        <position position="397"/>
    </location>
    <ligand>
        <name>dGTP</name>
        <dbReference type="ChEBI" id="CHEBI:61429"/>
        <label>2</label>
        <note>allosteric activator; ligand shared between 3 neighboring subunits of the tetramer</note>
    </ligand>
</feature>
<feature type="binding site" description="in chain A" evidence="1">
    <location>
        <position position="401"/>
    </location>
    <ligand>
        <name>dGTP</name>
        <dbReference type="ChEBI" id="CHEBI:61429"/>
        <label>2</label>
        <note>allosteric activator; ligand shared between 3 neighboring subunits of the tetramer</note>
    </ligand>
</feature>
<feature type="binding site" evidence="9 19">
    <location>
        <position position="417"/>
    </location>
    <ligand>
        <name>dGTP</name>
        <dbReference type="ChEBI" id="CHEBI:61429"/>
        <label>1</label>
        <note>substrate</note>
    </ligand>
</feature>
<feature type="binding site" description="in chain C" evidence="1">
    <location>
        <position position="419"/>
    </location>
    <ligand>
        <name>dGTP</name>
        <dbReference type="ChEBI" id="CHEBI:61429"/>
        <label>2</label>
        <note>allosteric activator; ligand shared between 3 neighboring subunits of the tetramer</note>
    </ligand>
</feature>
<feature type="binding site" description="in chain C" evidence="1">
    <location>
        <position position="420"/>
    </location>
    <ligand>
        <name>dGTP</name>
        <dbReference type="ChEBI" id="CHEBI:61429"/>
        <label>2</label>
        <note>allosteric activator; ligand shared between 3 neighboring subunits of the tetramer</note>
    </ligand>
</feature>
<feature type="binding site" description="in chain C" evidence="16 19">
    <location>
        <position position="494"/>
    </location>
    <ligand>
        <name>GTP</name>
        <dbReference type="ChEBI" id="CHEBI:37565"/>
        <note>allosteric activator; ligand shared between 3 neighboring subunits of the tetramer</note>
    </ligand>
</feature>
<feature type="binding site" description="in chain C" evidence="1">
    <location>
        <position position="498"/>
    </location>
    <ligand>
        <name>GTP</name>
        <dbReference type="ChEBI" id="CHEBI:37565"/>
        <note>allosteric activator; ligand shared between 3 neighboring subunits of the tetramer</note>
    </ligand>
</feature>
<feature type="binding site" description="in chain A" evidence="1">
    <location>
        <position position="565"/>
    </location>
    <ligand>
        <name>dGTP</name>
        <dbReference type="ChEBI" id="CHEBI:61429"/>
        <label>2</label>
        <note>allosteric activator; ligand shared between 3 neighboring subunits of the tetramer</note>
    </ligand>
</feature>
<feature type="binding site" description="in chain A" evidence="1">
    <location>
        <position position="565"/>
    </location>
    <ligand>
        <name>GTP</name>
        <dbReference type="ChEBI" id="CHEBI:37565"/>
        <note>allosteric activator; ligand shared between 3 neighboring subunits of the tetramer</note>
    </ligand>
</feature>
<feature type="modified residue" description="Phosphoserine" evidence="21 23">
    <location>
        <position position="49"/>
    </location>
</feature>
<feature type="modified residue" description="Phosphothreonine" evidence="21 23">
    <location>
        <position position="52"/>
    </location>
</feature>
<feature type="modified residue" description="Phosphoserine" evidence="23">
    <location>
        <position position="55"/>
    </location>
</feature>
<feature type="modified residue" description="Phosphothreonine" evidence="23">
    <location>
        <position position="56"/>
    </location>
</feature>
<feature type="modified residue" description="Phosphoserine" evidence="1">
    <location>
        <position position="64"/>
    </location>
</feature>
<feature type="modified residue" description="Phosphoserine" evidence="1">
    <location>
        <position position="125"/>
    </location>
</feature>
<feature type="modified residue" description="(Microbial infection) Phosphothreonine" evidence="11">
    <location>
        <position position="634"/>
    </location>
</feature>
<feature type="modified residue" description="Phosphothreonine" evidence="8 21 22 23">
    <location>
        <position position="634"/>
    </location>
</feature>
<feature type="cross-link" description="Glycyl lysine isopeptide (Lys-Gly) (interchain with G-Cter in SUMO2)" evidence="1">
    <location>
        <position position="509"/>
    </location>
</feature>
<feature type="splice variant" id="VSP_059661" description="In isoform 2.">
    <original>DGDIIAPLITPLKWNNKTSSCLQEVSKVKTCLKF</original>
    <variation>QCGAGEMAEDPDSIPSTQQPHAAHNQL</variation>
    <location>
        <begin position="625"/>
        <end position="658"/>
    </location>
</feature>
<feature type="mutagenesis site" description="In LCH mutant; abolishes formation of the tetramer and deoxynucleoside triphosphate (dNTPase) activity; when associated with C-112 and H-143." evidence="9">
    <original>F</original>
    <variation>L</variation>
    <location>
        <position position="109"/>
    </location>
</feature>
<feature type="mutagenesis site" description="In LCH mutant; abolishes formation of the tetramer and deoxynucleoside triphosphate (dNTPase) activity; when associated with L-109 and H-143." evidence="9">
    <original>F</original>
    <variation>C</variation>
    <location>
        <position position="112"/>
    </location>
</feature>
<feature type="mutagenesis site" description="In LCH mutant; abolishes formation of the tetramer and deoxynucleoside triphosphate (dNTPase) activity; when associated with L-109 and C-112." evidence="9">
    <original>R</original>
    <variation>H</variation>
    <location>
        <position position="143"/>
    </location>
</feature>
<feature type="mutagenesis site" description="Increased ability to restrict LINE-1 retrotransposon activity." evidence="8">
    <original>T</original>
    <variation>A</variation>
    <variation>V</variation>
    <location>
        <position position="634"/>
    </location>
</feature>
<feature type="mutagenesis site" description="Mimicks phosphorylation state, reduced ability to restrict LINE-1 retrotransposon activity." evidence="8">
    <original>T</original>
    <variation>E</variation>
    <location>
        <position position="634"/>
    </location>
</feature>
<feature type="sequence conflict" description="In Ref. 2; BAE31954/BAE30313." evidence="14" ref="2">
    <original>R</original>
    <variation>L</variation>
    <location>
        <position position="371"/>
    </location>
</feature>
<feature type="helix" evidence="25">
    <location>
        <begin position="79"/>
        <end position="88"/>
    </location>
</feature>
<feature type="helix" evidence="25">
    <location>
        <begin position="94"/>
        <end position="102"/>
    </location>
</feature>
<feature type="helix" evidence="25">
    <location>
        <begin position="107"/>
        <end position="112"/>
    </location>
</feature>
<feature type="helix" evidence="25">
    <location>
        <begin position="115"/>
        <end position="121"/>
    </location>
</feature>
<feature type="helix" evidence="25">
    <location>
        <begin position="128"/>
        <end position="138"/>
    </location>
</feature>
<feature type="helix" evidence="24">
    <location>
        <begin position="144"/>
        <end position="146"/>
    </location>
</feature>
<feature type="strand" evidence="25">
    <location>
        <begin position="148"/>
        <end position="152"/>
    </location>
</feature>
<feature type="turn" evidence="25">
    <location>
        <begin position="153"/>
        <end position="155"/>
    </location>
</feature>
<feature type="strand" evidence="25">
    <location>
        <begin position="156"/>
        <end position="160"/>
    </location>
</feature>
<feature type="helix" evidence="25">
    <location>
        <begin position="162"/>
        <end position="168"/>
    </location>
</feature>
<feature type="helix" evidence="25">
    <location>
        <begin position="171"/>
        <end position="174"/>
    </location>
</feature>
<feature type="helix" evidence="25">
    <location>
        <begin position="175"/>
        <end position="178"/>
    </location>
</feature>
<feature type="helix" evidence="25">
    <location>
        <begin position="183"/>
        <end position="187"/>
    </location>
</feature>
<feature type="helix" evidence="25">
    <location>
        <begin position="196"/>
        <end position="217"/>
    </location>
</feature>
<feature type="helix" evidence="25">
    <location>
        <begin position="219"/>
        <end position="221"/>
    </location>
</feature>
<feature type="helix" evidence="25">
    <location>
        <begin position="225"/>
        <end position="236"/>
    </location>
</feature>
<feature type="turn" evidence="25">
    <location>
        <begin position="237"/>
        <end position="241"/>
    </location>
</feature>
<feature type="helix" evidence="25">
    <location>
        <begin position="247"/>
        <end position="251"/>
    </location>
</feature>
<feature type="helix" evidence="25">
    <location>
        <begin position="253"/>
        <end position="257"/>
    </location>
</feature>
<feature type="strand" evidence="26">
    <location>
        <begin position="259"/>
        <end position="261"/>
    </location>
</feature>
<feature type="helix" evidence="25">
    <location>
        <begin position="265"/>
        <end position="279"/>
    </location>
</feature>
<feature type="helix" evidence="25">
    <location>
        <begin position="282"/>
        <end position="288"/>
    </location>
</feature>
<feature type="helix" evidence="25">
    <location>
        <begin position="293"/>
        <end position="305"/>
    </location>
</feature>
<feature type="strand" evidence="25">
    <location>
        <begin position="320"/>
        <end position="322"/>
    </location>
</feature>
<feature type="helix" evidence="25">
    <location>
        <begin position="324"/>
        <end position="331"/>
    </location>
</feature>
<feature type="turn" evidence="25">
    <location>
        <begin position="336"/>
        <end position="339"/>
    </location>
</feature>
<feature type="helix" evidence="25">
    <location>
        <begin position="342"/>
        <end position="355"/>
    </location>
</feature>
<feature type="helix" evidence="25">
    <location>
        <begin position="363"/>
        <end position="368"/>
    </location>
</feature>
<feature type="strand" evidence="25">
    <location>
        <begin position="370"/>
        <end position="378"/>
    </location>
</feature>
<feature type="strand" evidence="25">
    <location>
        <begin position="386"/>
        <end position="394"/>
    </location>
</feature>
<feature type="helix" evidence="25">
    <location>
        <begin position="396"/>
        <end position="398"/>
    </location>
</feature>
<feature type="helix" evidence="25">
    <location>
        <begin position="399"/>
        <end position="415"/>
    </location>
</feature>
<feature type="turn" evidence="25">
    <location>
        <begin position="416"/>
        <end position="418"/>
    </location>
</feature>
<feature type="helix" evidence="25">
    <location>
        <begin position="420"/>
        <end position="436"/>
    </location>
</feature>
<feature type="turn" evidence="25">
    <location>
        <begin position="437"/>
        <end position="439"/>
    </location>
</feature>
<feature type="helix" evidence="25">
    <location>
        <begin position="445"/>
        <end position="447"/>
    </location>
</feature>
<feature type="turn" evidence="25">
    <location>
        <begin position="452"/>
        <end position="454"/>
    </location>
</feature>
<feature type="helix" evidence="25">
    <location>
        <begin position="455"/>
        <end position="457"/>
    </location>
</feature>
<feature type="helix" evidence="25">
    <location>
        <begin position="459"/>
        <end position="462"/>
    </location>
</feature>
<feature type="helix" evidence="25">
    <location>
        <begin position="469"/>
        <end position="475"/>
    </location>
</feature>
<feature type="helix" evidence="25">
    <location>
        <begin position="479"/>
        <end position="481"/>
    </location>
</feature>
<feature type="helix" evidence="25">
    <location>
        <begin position="482"/>
        <end position="492"/>
    </location>
</feature>
<feature type="strand" evidence="25">
    <location>
        <begin position="498"/>
        <end position="503"/>
    </location>
</feature>
<feature type="strand" evidence="25">
    <location>
        <begin position="505"/>
        <end position="508"/>
    </location>
</feature>
<feature type="helix" evidence="25">
    <location>
        <begin position="514"/>
        <end position="517"/>
    </location>
</feature>
<feature type="helix" evidence="25">
    <location>
        <begin position="518"/>
        <end position="524"/>
    </location>
</feature>
<feature type="helix" evidence="25">
    <location>
        <begin position="537"/>
        <end position="539"/>
    </location>
</feature>
<feature type="strand" evidence="25">
    <location>
        <begin position="540"/>
        <end position="546"/>
    </location>
</feature>
<feature type="strand" evidence="25">
    <location>
        <begin position="590"/>
        <end position="597"/>
    </location>
</feature>
<feature type="helix" evidence="25">
    <location>
        <begin position="601"/>
        <end position="617"/>
    </location>
</feature>
<accession>Q60710</accession>
<accession>E9Q0K6</accession>
<accession>F8WJE0</accession>
<accession>Q3U5X2</accession>
<accession>Q543A4</accession>
<accession>Q91VK8</accession>
<comment type="function">
    <molecule>Isoform 1</molecule>
    <text evidence="1 6 7 8 9 10 11">Protein that acts both as a host restriction factor involved in defense response to virus and as a regulator of DNA end resection at stalled replication forks (By similarity). Has deoxynucleoside triphosphate (dNTPase) activity, which is required to restrict infection by viruses: dNTPase activity reduces cellular dNTP levels to levels too low for retroviral reverse transcription to occur, blocking early-stage virus replication in dendritic and other myeloid cells (PubMed:23872947, PubMed:23972988, PubMed:26667483, PubMed:29379009, PubMed:31548683). Likewise, suppresses LINE-1 retrotransposon activity (PubMed:26667483). In addition to virus restriction, dNTPase activity acts as a regulator of DNA precursor pools by regulating dNTP pools (By similarity). Phosphorylation at Thr-634 acts as a switch to control dNTPase-dependent and -independent functions: it inhibits dNTPase activity and ability to restrict infection by viruses, while it promotes DNA end resection at stalled replication forks (By similarity). Functions during S phase at stalled DNA replication forks to promote the resection of gapped or reversed forks: acts by stimulating the exonuclease activity of MRE11, activating the ATR-CHK1 pathway and allowing the forks to restart replication (By similarity). Its ability to promote degradation of nascent DNA at stalled replication forks is required to prevent induction of type I interferons, thereby preventing chronic inflammation (By similarity). Ability to promote DNA end resection at stalled replication forks is independent of dNTPase activity (By similarity). Enhances immunoglobulin hypermutation in B-lymphocytes by promoting transversion mutation (PubMed:29669924).</text>
</comment>
<comment type="catalytic activity">
    <reaction evidence="9 11">
        <text>a 2'-deoxyribonucleoside 5'-triphosphate + H2O = a 2'-deoxyribonucleoside + triphosphate + H(+)</text>
        <dbReference type="Rhea" id="RHEA:46148"/>
        <dbReference type="ChEBI" id="CHEBI:15377"/>
        <dbReference type="ChEBI" id="CHEBI:15378"/>
        <dbReference type="ChEBI" id="CHEBI:18036"/>
        <dbReference type="ChEBI" id="CHEBI:18274"/>
        <dbReference type="ChEBI" id="CHEBI:61560"/>
    </reaction>
    <physiologicalReaction direction="left-to-right" evidence="11">
        <dbReference type="Rhea" id="RHEA:46149"/>
    </physiologicalReaction>
</comment>
<comment type="catalytic activity">
    <reaction evidence="9 11">
        <text>dATP + H2O = 2'-deoxyadenosine + triphosphate + H(+)</text>
        <dbReference type="Rhea" id="RHEA:67648"/>
        <dbReference type="ChEBI" id="CHEBI:15377"/>
        <dbReference type="ChEBI" id="CHEBI:15378"/>
        <dbReference type="ChEBI" id="CHEBI:17256"/>
        <dbReference type="ChEBI" id="CHEBI:18036"/>
        <dbReference type="ChEBI" id="CHEBI:61404"/>
    </reaction>
    <physiologicalReaction direction="left-to-right" evidence="11">
        <dbReference type="Rhea" id="RHEA:67649"/>
    </physiologicalReaction>
</comment>
<comment type="catalytic activity">
    <reaction evidence="9 11">
        <text>dCTP + H2O = 2'-deoxycytidine + triphosphate + H(+)</text>
        <dbReference type="Rhea" id="RHEA:80083"/>
        <dbReference type="ChEBI" id="CHEBI:15377"/>
        <dbReference type="ChEBI" id="CHEBI:15378"/>
        <dbReference type="ChEBI" id="CHEBI:15698"/>
        <dbReference type="ChEBI" id="CHEBI:18036"/>
        <dbReference type="ChEBI" id="CHEBI:61481"/>
    </reaction>
    <physiologicalReaction direction="left-to-right" evidence="11">
        <dbReference type="Rhea" id="RHEA:80084"/>
    </physiologicalReaction>
</comment>
<comment type="catalytic activity">
    <reaction evidence="9 11">
        <text>dGTP + H2O = 2'-deoxyguanosine + triphosphate + H(+)</text>
        <dbReference type="Rhea" id="RHEA:15193"/>
        <dbReference type="ChEBI" id="CHEBI:15377"/>
        <dbReference type="ChEBI" id="CHEBI:15378"/>
        <dbReference type="ChEBI" id="CHEBI:17172"/>
        <dbReference type="ChEBI" id="CHEBI:18036"/>
        <dbReference type="ChEBI" id="CHEBI:61429"/>
    </reaction>
    <physiologicalReaction direction="left-to-right" evidence="11">
        <dbReference type="Rhea" id="RHEA:15194"/>
    </physiologicalReaction>
</comment>
<comment type="catalytic activity">
    <reaction evidence="9 11">
        <text>dTTP + H2O = thymidine + triphosphate + H(+)</text>
        <dbReference type="Rhea" id="RHEA:80079"/>
        <dbReference type="ChEBI" id="CHEBI:15377"/>
        <dbReference type="ChEBI" id="CHEBI:15378"/>
        <dbReference type="ChEBI" id="CHEBI:17748"/>
        <dbReference type="ChEBI" id="CHEBI:18036"/>
        <dbReference type="ChEBI" id="CHEBI:37568"/>
    </reaction>
    <physiologicalReaction direction="left-to-right" evidence="11">
        <dbReference type="Rhea" id="RHEA:80080"/>
    </physiologicalReaction>
</comment>
<comment type="cofactor">
    <cofactor evidence="1">
        <name>Zn(2+)</name>
        <dbReference type="ChEBI" id="CHEBI:29105"/>
    </cofactor>
    <text evidence="1">Binds 1 zinc ion per subunit.</text>
</comment>
<comment type="activity regulation">
    <text evidence="16">Allosterically activated and regulated via the combined actions of GTP and dNTPs (dATP, dGTP, dTTP and dCTP): Allosteric site 1 binds GTP, while allosteric site 2 binds dNTP. Allosteric activation promotes the formation of highly active homotetramers. Isoform 1: Phosphorylation at Thr-634 impairs homotetramerization, thereby inhibiting dNTPase activity, leading to reduced ability to restrict infection by viruses.</text>
</comment>
<comment type="subunit">
    <text evidence="1 9">Homodimer; in absence of GTP and dNTP (By similarity). Homotetramer; in GTP- and dNTP-bound form (PubMed:29379009). Interacts with MRE11; leading to stimulate the exonuclease activity of MRE11 (By similarity). Interacts with RBBP8/CtIP (By similarity). Interacts with RBBP8/CtIP. Interacts (via its C-terminus) with CD81.</text>
</comment>
<comment type="subcellular location">
    <subcellularLocation>
        <location evidence="1">Nucleus</location>
    </subcellularLocation>
    <subcellularLocation>
        <location evidence="1">Chromosome</location>
    </subcellularLocation>
    <text evidence="1">Localizes to sites of DNA double-strand breaks in response to DNA damage.</text>
</comment>
<comment type="alternative products">
    <event type="alternative splicing"/>
    <isoform>
        <id>Q60710-1</id>
        <name>1</name>
        <sequence type="displayed"/>
    </isoform>
    <isoform>
        <id>Q60710-2</id>
        <name>2</name>
        <sequence type="described" ref="VSP_059661"/>
    </isoform>
</comment>
<comment type="induction">
    <text evidence="5">By interferon alpha, beta and gamma (IFN-alpha, IFN-beta and IFN-gamma).</text>
</comment>
<comment type="domain">
    <text evidence="9">In mouse, the SAM domain is required for deoxynucleoside triphosphate (dNTPase) activity and ability to restrict infection by viruses. It acts by capping allosteric sites.</text>
</comment>
<comment type="PTM">
    <molecule>Isoform 1</molecule>
    <text evidence="1 8 15">Phosphorylation at Thr-634 by CDK1 acts as a switch to control deoxynucleoside triphosphate (dNTPase)-dependent and -independent functions (By similarity) (PubMed:26667483). Phosphorylation at Thr-634 takes place in cycling cells: it reduces the stability of the homotetramer, impairing the dNTPase activity and subsequent ability to restrict infection by viruses (Probable). It also inhibits ability to suppress LINE-1 retrotransposon activity (PubMed:26667483). In contrast, phosphorylation at Thr-634 promotes DNA end resection at stalled replication forks in response to DNA damage (By similarity).</text>
</comment>
<comment type="PTM">
    <molecule>Isoform 1</molecule>
    <text evidence="11">(Microbial infection) Phosphorylation at Thr-634 by mouse cytomegalovirus kinase M97 leads to a reduced level of dNTP hydrolase activity and the loss of viral restriction.</text>
</comment>
<comment type="PTM">
    <molecule>Isoform 2</molecule>
    <text evidence="14">Not phosphorylated by CDK1 at the C-terminus.</text>
</comment>
<comment type="disruption phenotype">
    <text evidence="6 7 11">Mice are viable and fertile but show increased cellular dNTP concentrations and impaired ability to restrict retroviral replication in lymphocytes, macrophages and dendritic cells (PubMed:23972988). Mice also display interferon (IFN)-beta-dependent transcriptional up-regulation of type I IFN-inducible genes in various cell types indicative of spontaneous IFN production (PubMed:23872947, PubMed:23972988). In addition, the replication of mouse cytomegalovirus is significantly enhanced in mutant mice (PubMed:31548683).</text>
</comment>
<comment type="similarity">
    <text evidence="14">Belongs to the SAMHD1 family.</text>
</comment>
<comment type="sequence caution" evidence="14">
    <conflict type="erroneous initiation">
        <sequence resource="EMBL-CDS" id="AAA66219"/>
    </conflict>
    <text>Truncated N-terminus.</text>
</comment>
<comment type="sequence caution" evidence="14">
    <conflict type="frameshift">
        <sequence resource="EMBL-CDS" id="AAA66219"/>
    </conflict>
</comment>
<comment type="sequence caution" evidence="14">
    <conflict type="erroneous initiation">
        <sequence resource="EMBL-CDS" id="AAH12721"/>
    </conflict>
    <text>Truncated N-terminus.</text>
</comment>
<comment type="sequence caution" evidence="14">
    <conflict type="erroneous initiation">
        <sequence resource="EMBL-CDS" id="AAH67198"/>
    </conflict>
    <text>Truncated N-terminus.</text>
</comment>
<comment type="sequence caution" evidence="14">
    <conflict type="erroneous initiation">
        <sequence resource="EMBL-CDS" id="BAC35801"/>
    </conflict>
    <text>Truncated N-terminus.</text>
</comment>
<comment type="sequence caution" evidence="14">
    <conflict type="erroneous initiation">
        <sequence resource="EMBL-CDS" id="BAE30313"/>
    </conflict>
    <text>Truncated N-terminus.</text>
</comment>
<comment type="sequence caution" evidence="14">
    <conflict type="erroneous initiation">
        <sequence resource="EMBL-CDS" id="BAE31954"/>
    </conflict>
    <text>Truncated N-terminus.</text>
</comment>
<proteinExistence type="evidence at protein level"/>
<gene>
    <name evidence="17" type="primary">Samhd1</name>
    <name evidence="13" type="synonym">Mg21</name>
</gene>